<accession>B5XYF8</accession>
<protein>
    <recommendedName>
        <fullName evidence="1">Large ribosomal subunit protein uL1</fullName>
    </recommendedName>
    <alternativeName>
        <fullName evidence="2">50S ribosomal protein L1</fullName>
    </alternativeName>
</protein>
<comment type="function">
    <text evidence="1">Binds directly to 23S rRNA. The L1 stalk is quite mobile in the ribosome, and is involved in E site tRNA release.</text>
</comment>
<comment type="function">
    <text evidence="1">Protein L1 is also a translational repressor protein, it controls the translation of the L11 operon by binding to its mRNA.</text>
</comment>
<comment type="subunit">
    <text evidence="1">Part of the 50S ribosomal subunit.</text>
</comment>
<comment type="similarity">
    <text evidence="1">Belongs to the universal ribosomal protein uL1 family.</text>
</comment>
<keyword id="KW-0678">Repressor</keyword>
<keyword id="KW-0687">Ribonucleoprotein</keyword>
<keyword id="KW-0689">Ribosomal protein</keyword>
<keyword id="KW-0694">RNA-binding</keyword>
<keyword id="KW-0699">rRNA-binding</keyword>
<keyword id="KW-0810">Translation regulation</keyword>
<keyword id="KW-0820">tRNA-binding</keyword>
<name>RL1_KLEP3</name>
<reference key="1">
    <citation type="journal article" date="2008" name="PLoS Genet.">
        <title>Complete genome sequence of the N2-fixing broad host range endophyte Klebsiella pneumoniae 342 and virulence predictions verified in mice.</title>
        <authorList>
            <person name="Fouts D.E."/>
            <person name="Tyler H.L."/>
            <person name="DeBoy R.T."/>
            <person name="Daugherty S."/>
            <person name="Ren Q."/>
            <person name="Badger J.H."/>
            <person name="Durkin A.S."/>
            <person name="Huot H."/>
            <person name="Shrivastava S."/>
            <person name="Kothari S."/>
            <person name="Dodson R.J."/>
            <person name="Mohamoud Y."/>
            <person name="Khouri H."/>
            <person name="Roesch L.F.W."/>
            <person name="Krogfelt K.A."/>
            <person name="Struve C."/>
            <person name="Triplett E.W."/>
            <person name="Methe B.A."/>
        </authorList>
    </citation>
    <scope>NUCLEOTIDE SEQUENCE [LARGE SCALE GENOMIC DNA]</scope>
    <source>
        <strain>342</strain>
    </source>
</reference>
<evidence type="ECO:0000255" key="1">
    <source>
        <dbReference type="HAMAP-Rule" id="MF_01318"/>
    </source>
</evidence>
<evidence type="ECO:0000305" key="2"/>
<organism>
    <name type="scientific">Klebsiella pneumoniae (strain 342)</name>
    <dbReference type="NCBI Taxonomy" id="507522"/>
    <lineage>
        <taxon>Bacteria</taxon>
        <taxon>Pseudomonadati</taxon>
        <taxon>Pseudomonadota</taxon>
        <taxon>Gammaproteobacteria</taxon>
        <taxon>Enterobacterales</taxon>
        <taxon>Enterobacteriaceae</taxon>
        <taxon>Klebsiella/Raoultella group</taxon>
        <taxon>Klebsiella</taxon>
        <taxon>Klebsiella pneumoniae complex</taxon>
    </lineage>
</organism>
<dbReference type="EMBL" id="CP000964">
    <property type="protein sequence ID" value="ACI06756.1"/>
    <property type="molecule type" value="Genomic_DNA"/>
</dbReference>
<dbReference type="SMR" id="B5XYF8"/>
<dbReference type="KEGG" id="kpe:KPK_5312"/>
<dbReference type="HOGENOM" id="CLU_062853_0_0_6"/>
<dbReference type="Proteomes" id="UP000001734">
    <property type="component" value="Chromosome"/>
</dbReference>
<dbReference type="GO" id="GO:0022625">
    <property type="term" value="C:cytosolic large ribosomal subunit"/>
    <property type="evidence" value="ECO:0007669"/>
    <property type="project" value="TreeGrafter"/>
</dbReference>
<dbReference type="GO" id="GO:0019843">
    <property type="term" value="F:rRNA binding"/>
    <property type="evidence" value="ECO:0007669"/>
    <property type="project" value="UniProtKB-UniRule"/>
</dbReference>
<dbReference type="GO" id="GO:0003735">
    <property type="term" value="F:structural constituent of ribosome"/>
    <property type="evidence" value="ECO:0007669"/>
    <property type="project" value="InterPro"/>
</dbReference>
<dbReference type="GO" id="GO:0000049">
    <property type="term" value="F:tRNA binding"/>
    <property type="evidence" value="ECO:0007669"/>
    <property type="project" value="UniProtKB-KW"/>
</dbReference>
<dbReference type="GO" id="GO:0006417">
    <property type="term" value="P:regulation of translation"/>
    <property type="evidence" value="ECO:0007669"/>
    <property type="project" value="UniProtKB-KW"/>
</dbReference>
<dbReference type="GO" id="GO:0006412">
    <property type="term" value="P:translation"/>
    <property type="evidence" value="ECO:0007669"/>
    <property type="project" value="UniProtKB-UniRule"/>
</dbReference>
<dbReference type="CDD" id="cd00403">
    <property type="entry name" value="Ribosomal_L1"/>
    <property type="match status" value="1"/>
</dbReference>
<dbReference type="FunFam" id="3.40.50.790:FF:000001">
    <property type="entry name" value="50S ribosomal protein L1"/>
    <property type="match status" value="1"/>
</dbReference>
<dbReference type="Gene3D" id="3.30.190.20">
    <property type="match status" value="1"/>
</dbReference>
<dbReference type="Gene3D" id="3.40.50.790">
    <property type="match status" value="1"/>
</dbReference>
<dbReference type="HAMAP" id="MF_01318_B">
    <property type="entry name" value="Ribosomal_uL1_B"/>
    <property type="match status" value="1"/>
</dbReference>
<dbReference type="InterPro" id="IPR005878">
    <property type="entry name" value="Ribosom_uL1_bac-type"/>
</dbReference>
<dbReference type="InterPro" id="IPR002143">
    <property type="entry name" value="Ribosomal_uL1"/>
</dbReference>
<dbReference type="InterPro" id="IPR023674">
    <property type="entry name" value="Ribosomal_uL1-like"/>
</dbReference>
<dbReference type="InterPro" id="IPR028364">
    <property type="entry name" value="Ribosomal_uL1/biogenesis"/>
</dbReference>
<dbReference type="InterPro" id="IPR016095">
    <property type="entry name" value="Ribosomal_uL1_3-a/b-sand"/>
</dbReference>
<dbReference type="InterPro" id="IPR023673">
    <property type="entry name" value="Ribosomal_uL1_CS"/>
</dbReference>
<dbReference type="NCBIfam" id="TIGR01169">
    <property type="entry name" value="rplA_bact"/>
    <property type="match status" value="1"/>
</dbReference>
<dbReference type="PANTHER" id="PTHR36427">
    <property type="entry name" value="54S RIBOSOMAL PROTEIN L1, MITOCHONDRIAL"/>
    <property type="match status" value="1"/>
</dbReference>
<dbReference type="PANTHER" id="PTHR36427:SF3">
    <property type="entry name" value="LARGE RIBOSOMAL SUBUNIT PROTEIN UL1M"/>
    <property type="match status" value="1"/>
</dbReference>
<dbReference type="Pfam" id="PF00687">
    <property type="entry name" value="Ribosomal_L1"/>
    <property type="match status" value="1"/>
</dbReference>
<dbReference type="PIRSF" id="PIRSF002155">
    <property type="entry name" value="Ribosomal_L1"/>
    <property type="match status" value="1"/>
</dbReference>
<dbReference type="SUPFAM" id="SSF56808">
    <property type="entry name" value="Ribosomal protein L1"/>
    <property type="match status" value="1"/>
</dbReference>
<dbReference type="PROSITE" id="PS01199">
    <property type="entry name" value="RIBOSOMAL_L1"/>
    <property type="match status" value="1"/>
</dbReference>
<sequence>MAKLTKRMSVIRDKVDATKQYDINEAISLLKELATAKFVESVDVAVNLGIDARKSDQNVRGATVLPHGTGRSVRVAVFAQGANAEAAKAAGAELVGMEDLADQIKKGEMNFDVVIASPDAMRVVGQLGQVLGPRGLMPNPKVGTVTPNVAEAVKNAKAGQVRYRNDKNGIIHTTIGKVDFDADKLKENLEALLVALKKAKPTQAKGVYIKKVSISTTMGAGVAVDQAGLNASAN</sequence>
<feature type="chain" id="PRO_1000141415" description="Large ribosomal subunit protein uL1">
    <location>
        <begin position="1"/>
        <end position="234"/>
    </location>
</feature>
<gene>
    <name evidence="1" type="primary">rplA</name>
    <name type="ordered locus">KPK_5312</name>
</gene>
<proteinExistence type="inferred from homology"/>